<accession>Q3K3R1</accession>
<evidence type="ECO:0000255" key="1">
    <source>
        <dbReference type="HAMAP-Rule" id="MF_01661"/>
    </source>
</evidence>
<name>RBSD_STRA1</name>
<keyword id="KW-0119">Carbohydrate metabolism</keyword>
<keyword id="KW-0963">Cytoplasm</keyword>
<keyword id="KW-0413">Isomerase</keyword>
<proteinExistence type="inferred from homology"/>
<sequence>MKKTGILNSHLAKLADDLGHTDQVCIGDLGLPVPNGIPKIDLSLTSGVPSFQEVLDIYLENILVEKVILAEEIKEANPDQLSRLLAKLDNSVSIEYVSHDHLKQMTQDVKAVIRTGENTPYSNIILQSGVII</sequence>
<gene>
    <name evidence="1" type="primary">rbsD</name>
    <name type="ordered locus">SAK_0169</name>
</gene>
<organism>
    <name type="scientific">Streptococcus agalactiae serotype Ia (strain ATCC 27591 / A909 / CDC SS700)</name>
    <dbReference type="NCBI Taxonomy" id="205921"/>
    <lineage>
        <taxon>Bacteria</taxon>
        <taxon>Bacillati</taxon>
        <taxon>Bacillota</taxon>
        <taxon>Bacilli</taxon>
        <taxon>Lactobacillales</taxon>
        <taxon>Streptococcaceae</taxon>
        <taxon>Streptococcus</taxon>
    </lineage>
</organism>
<feature type="chain" id="PRO_0000346279" description="D-ribose pyranase">
    <location>
        <begin position="1"/>
        <end position="132"/>
    </location>
</feature>
<feature type="active site" description="Proton donor" evidence="1">
    <location>
        <position position="20"/>
    </location>
</feature>
<feature type="binding site" evidence="1">
    <location>
        <position position="28"/>
    </location>
    <ligand>
        <name>substrate</name>
    </ligand>
</feature>
<feature type="binding site" evidence="1">
    <location>
        <position position="99"/>
    </location>
    <ligand>
        <name>substrate</name>
    </ligand>
</feature>
<feature type="binding site" evidence="1">
    <location>
        <begin position="121"/>
        <end position="123"/>
    </location>
    <ligand>
        <name>substrate</name>
    </ligand>
</feature>
<reference key="1">
    <citation type="journal article" date="2005" name="Proc. Natl. Acad. Sci. U.S.A.">
        <title>Genome analysis of multiple pathogenic isolates of Streptococcus agalactiae: implications for the microbial 'pan-genome'.</title>
        <authorList>
            <person name="Tettelin H."/>
            <person name="Masignani V."/>
            <person name="Cieslewicz M.J."/>
            <person name="Donati C."/>
            <person name="Medini D."/>
            <person name="Ward N.L."/>
            <person name="Angiuoli S.V."/>
            <person name="Crabtree J."/>
            <person name="Jones A.L."/>
            <person name="Durkin A.S."/>
            <person name="DeBoy R.T."/>
            <person name="Davidsen T.M."/>
            <person name="Mora M."/>
            <person name="Scarselli M."/>
            <person name="Margarit y Ros I."/>
            <person name="Peterson J.D."/>
            <person name="Hauser C.R."/>
            <person name="Sundaram J.P."/>
            <person name="Nelson W.C."/>
            <person name="Madupu R."/>
            <person name="Brinkac L.M."/>
            <person name="Dodson R.J."/>
            <person name="Rosovitz M.J."/>
            <person name="Sullivan S.A."/>
            <person name="Daugherty S.C."/>
            <person name="Haft D.H."/>
            <person name="Selengut J."/>
            <person name="Gwinn M.L."/>
            <person name="Zhou L."/>
            <person name="Zafar N."/>
            <person name="Khouri H."/>
            <person name="Radune D."/>
            <person name="Dimitrov G."/>
            <person name="Watkins K."/>
            <person name="O'Connor K.J."/>
            <person name="Smith S."/>
            <person name="Utterback T.R."/>
            <person name="White O."/>
            <person name="Rubens C.E."/>
            <person name="Grandi G."/>
            <person name="Madoff L.C."/>
            <person name="Kasper D.L."/>
            <person name="Telford J.L."/>
            <person name="Wessels M.R."/>
            <person name="Rappuoli R."/>
            <person name="Fraser C.M."/>
        </authorList>
    </citation>
    <scope>NUCLEOTIDE SEQUENCE [LARGE SCALE GENOMIC DNA]</scope>
    <source>
        <strain>ATCC 27591 / A909 / CDC SS700</strain>
    </source>
</reference>
<comment type="function">
    <text evidence="1">Catalyzes the interconversion of beta-pyran and beta-furan forms of D-ribose.</text>
</comment>
<comment type="catalytic activity">
    <reaction evidence="1">
        <text>beta-D-ribopyranose = beta-D-ribofuranose</text>
        <dbReference type="Rhea" id="RHEA:25432"/>
        <dbReference type="ChEBI" id="CHEBI:27476"/>
        <dbReference type="ChEBI" id="CHEBI:47002"/>
        <dbReference type="EC" id="5.4.99.62"/>
    </reaction>
</comment>
<comment type="pathway">
    <text evidence="1">Carbohydrate metabolism; D-ribose degradation; D-ribose 5-phosphate from beta-D-ribopyranose: step 1/2.</text>
</comment>
<comment type="subunit">
    <text evidence="1">Homodecamer.</text>
</comment>
<comment type="subcellular location">
    <subcellularLocation>
        <location evidence="1">Cytoplasm</location>
    </subcellularLocation>
</comment>
<comment type="similarity">
    <text evidence="1">Belongs to the RbsD / FucU family. RbsD subfamily.</text>
</comment>
<dbReference type="EC" id="5.4.99.62" evidence="1"/>
<dbReference type="EMBL" id="CP000114">
    <property type="protein sequence ID" value="ABA46332.1"/>
    <property type="molecule type" value="Genomic_DNA"/>
</dbReference>
<dbReference type="RefSeq" id="WP_000750739.1">
    <property type="nucleotide sequence ID" value="NC_007432.1"/>
</dbReference>
<dbReference type="SMR" id="Q3K3R1"/>
<dbReference type="KEGG" id="sak:SAK_0169"/>
<dbReference type="HOGENOM" id="CLU_135498_0_0_9"/>
<dbReference type="UniPathway" id="UPA00916">
    <property type="reaction ID" value="UER00888"/>
</dbReference>
<dbReference type="GO" id="GO:0005829">
    <property type="term" value="C:cytosol"/>
    <property type="evidence" value="ECO:0007669"/>
    <property type="project" value="TreeGrafter"/>
</dbReference>
<dbReference type="GO" id="GO:0062193">
    <property type="term" value="F:D-ribose pyranase activity"/>
    <property type="evidence" value="ECO:0007669"/>
    <property type="project" value="UniProtKB-EC"/>
</dbReference>
<dbReference type="GO" id="GO:0016872">
    <property type="term" value="F:intramolecular lyase activity"/>
    <property type="evidence" value="ECO:0007669"/>
    <property type="project" value="UniProtKB-UniRule"/>
</dbReference>
<dbReference type="GO" id="GO:0048029">
    <property type="term" value="F:monosaccharide binding"/>
    <property type="evidence" value="ECO:0007669"/>
    <property type="project" value="InterPro"/>
</dbReference>
<dbReference type="GO" id="GO:0019303">
    <property type="term" value="P:D-ribose catabolic process"/>
    <property type="evidence" value="ECO:0007669"/>
    <property type="project" value="UniProtKB-UniRule"/>
</dbReference>
<dbReference type="Gene3D" id="3.40.1650.10">
    <property type="entry name" value="RbsD-like domain"/>
    <property type="match status" value="1"/>
</dbReference>
<dbReference type="HAMAP" id="MF_01661">
    <property type="entry name" value="D_rib_pyranase"/>
    <property type="match status" value="1"/>
</dbReference>
<dbReference type="InterPro" id="IPR023064">
    <property type="entry name" value="D-ribose_pyranase"/>
</dbReference>
<dbReference type="InterPro" id="IPR023750">
    <property type="entry name" value="RbsD-like_sf"/>
</dbReference>
<dbReference type="InterPro" id="IPR007721">
    <property type="entry name" value="RbsD_FucU"/>
</dbReference>
<dbReference type="NCBIfam" id="NF008761">
    <property type="entry name" value="PRK11797.1"/>
    <property type="match status" value="1"/>
</dbReference>
<dbReference type="PANTHER" id="PTHR37831">
    <property type="entry name" value="D-RIBOSE PYRANASE"/>
    <property type="match status" value="1"/>
</dbReference>
<dbReference type="PANTHER" id="PTHR37831:SF1">
    <property type="entry name" value="D-RIBOSE PYRANASE"/>
    <property type="match status" value="1"/>
</dbReference>
<dbReference type="Pfam" id="PF05025">
    <property type="entry name" value="RbsD_FucU"/>
    <property type="match status" value="1"/>
</dbReference>
<dbReference type="SUPFAM" id="SSF102546">
    <property type="entry name" value="RbsD-like"/>
    <property type="match status" value="1"/>
</dbReference>
<protein>
    <recommendedName>
        <fullName evidence="1">D-ribose pyranase</fullName>
        <ecNumber evidence="1">5.4.99.62</ecNumber>
    </recommendedName>
</protein>